<organism>
    <name type="scientific">Escherichia coli (strain 55989 / EAEC)</name>
    <dbReference type="NCBI Taxonomy" id="585055"/>
    <lineage>
        <taxon>Bacteria</taxon>
        <taxon>Pseudomonadati</taxon>
        <taxon>Pseudomonadota</taxon>
        <taxon>Gammaproteobacteria</taxon>
        <taxon>Enterobacterales</taxon>
        <taxon>Enterobacteriaceae</taxon>
        <taxon>Escherichia</taxon>
    </lineage>
</organism>
<gene>
    <name evidence="1" type="primary">glpK</name>
    <name type="ordered locus">EC55989_4404</name>
</gene>
<feature type="chain" id="PRO_1000124193" description="Glycerol kinase">
    <location>
        <begin position="1"/>
        <end position="502"/>
    </location>
</feature>
<feature type="binding site" evidence="1">
    <location>
        <position position="14"/>
    </location>
    <ligand>
        <name>ADP</name>
        <dbReference type="ChEBI" id="CHEBI:456216"/>
    </ligand>
</feature>
<feature type="binding site" evidence="1">
    <location>
        <position position="14"/>
    </location>
    <ligand>
        <name>ATP</name>
        <dbReference type="ChEBI" id="CHEBI:30616"/>
    </ligand>
</feature>
<feature type="binding site" evidence="1">
    <location>
        <position position="14"/>
    </location>
    <ligand>
        <name>sn-glycerol 3-phosphate</name>
        <dbReference type="ChEBI" id="CHEBI:57597"/>
    </ligand>
</feature>
<feature type="binding site" evidence="1">
    <location>
        <position position="15"/>
    </location>
    <ligand>
        <name>ATP</name>
        <dbReference type="ChEBI" id="CHEBI:30616"/>
    </ligand>
</feature>
<feature type="binding site" evidence="1">
    <location>
        <position position="16"/>
    </location>
    <ligand>
        <name>ATP</name>
        <dbReference type="ChEBI" id="CHEBI:30616"/>
    </ligand>
</feature>
<feature type="binding site" evidence="1">
    <location>
        <position position="18"/>
    </location>
    <ligand>
        <name>ADP</name>
        <dbReference type="ChEBI" id="CHEBI:456216"/>
    </ligand>
</feature>
<feature type="binding site" evidence="1">
    <location>
        <position position="84"/>
    </location>
    <ligand>
        <name>glycerol</name>
        <dbReference type="ChEBI" id="CHEBI:17754"/>
    </ligand>
</feature>
<feature type="binding site" evidence="1">
    <location>
        <position position="84"/>
    </location>
    <ligand>
        <name>sn-glycerol 3-phosphate</name>
        <dbReference type="ChEBI" id="CHEBI:57597"/>
    </ligand>
</feature>
<feature type="binding site" evidence="1">
    <location>
        <position position="85"/>
    </location>
    <ligand>
        <name>glycerol</name>
        <dbReference type="ChEBI" id="CHEBI:17754"/>
    </ligand>
</feature>
<feature type="binding site" evidence="1">
    <location>
        <position position="85"/>
    </location>
    <ligand>
        <name>sn-glycerol 3-phosphate</name>
        <dbReference type="ChEBI" id="CHEBI:57597"/>
    </ligand>
</feature>
<feature type="binding site" evidence="1">
    <location>
        <position position="136"/>
    </location>
    <ligand>
        <name>glycerol</name>
        <dbReference type="ChEBI" id="CHEBI:17754"/>
    </ligand>
</feature>
<feature type="binding site" evidence="1">
    <location>
        <position position="136"/>
    </location>
    <ligand>
        <name>sn-glycerol 3-phosphate</name>
        <dbReference type="ChEBI" id="CHEBI:57597"/>
    </ligand>
</feature>
<feature type="binding site" evidence="1">
    <location>
        <position position="246"/>
    </location>
    <ligand>
        <name>glycerol</name>
        <dbReference type="ChEBI" id="CHEBI:17754"/>
    </ligand>
</feature>
<feature type="binding site" evidence="1">
    <location>
        <position position="246"/>
    </location>
    <ligand>
        <name>sn-glycerol 3-phosphate</name>
        <dbReference type="ChEBI" id="CHEBI:57597"/>
    </ligand>
</feature>
<feature type="binding site" evidence="1">
    <location>
        <position position="247"/>
    </location>
    <ligand>
        <name>glycerol</name>
        <dbReference type="ChEBI" id="CHEBI:17754"/>
    </ligand>
</feature>
<feature type="binding site" evidence="1">
    <location>
        <position position="268"/>
    </location>
    <ligand>
        <name>ADP</name>
        <dbReference type="ChEBI" id="CHEBI:456216"/>
    </ligand>
</feature>
<feature type="binding site" evidence="1">
    <location>
        <position position="268"/>
    </location>
    <ligand>
        <name>ATP</name>
        <dbReference type="ChEBI" id="CHEBI:30616"/>
    </ligand>
</feature>
<feature type="binding site" evidence="1">
    <location>
        <position position="311"/>
    </location>
    <ligand>
        <name>ADP</name>
        <dbReference type="ChEBI" id="CHEBI:456216"/>
    </ligand>
</feature>
<feature type="binding site" evidence="1">
    <location>
        <position position="311"/>
    </location>
    <ligand>
        <name>ATP</name>
        <dbReference type="ChEBI" id="CHEBI:30616"/>
    </ligand>
</feature>
<feature type="binding site" evidence="1">
    <location>
        <position position="315"/>
    </location>
    <ligand>
        <name>ATP</name>
        <dbReference type="ChEBI" id="CHEBI:30616"/>
    </ligand>
</feature>
<feature type="binding site" evidence="1">
    <location>
        <position position="412"/>
    </location>
    <ligand>
        <name>ADP</name>
        <dbReference type="ChEBI" id="CHEBI:456216"/>
    </ligand>
</feature>
<feature type="binding site" evidence="1">
    <location>
        <position position="412"/>
    </location>
    <ligand>
        <name>ATP</name>
        <dbReference type="ChEBI" id="CHEBI:30616"/>
    </ligand>
</feature>
<feature type="binding site" evidence="1">
    <location>
        <position position="416"/>
    </location>
    <ligand>
        <name>ADP</name>
        <dbReference type="ChEBI" id="CHEBI:456216"/>
    </ligand>
</feature>
<keyword id="KW-0021">Allosteric enzyme</keyword>
<keyword id="KW-0067">ATP-binding</keyword>
<keyword id="KW-0319">Glycerol metabolism</keyword>
<keyword id="KW-0418">Kinase</keyword>
<keyword id="KW-0479">Metal-binding</keyword>
<keyword id="KW-0547">Nucleotide-binding</keyword>
<keyword id="KW-1185">Reference proteome</keyword>
<keyword id="KW-0808">Transferase</keyword>
<keyword id="KW-0862">Zinc</keyword>
<dbReference type="EC" id="2.7.1.30" evidence="1"/>
<dbReference type="EMBL" id="CU928145">
    <property type="protein sequence ID" value="CAV01126.1"/>
    <property type="molecule type" value="Genomic_DNA"/>
</dbReference>
<dbReference type="RefSeq" id="WP_000136788.1">
    <property type="nucleotide sequence ID" value="NC_011748.1"/>
</dbReference>
<dbReference type="SMR" id="B7LA23"/>
<dbReference type="GeneID" id="75169366"/>
<dbReference type="KEGG" id="eck:EC55989_4404"/>
<dbReference type="HOGENOM" id="CLU_009281_2_3_6"/>
<dbReference type="UniPathway" id="UPA00618">
    <property type="reaction ID" value="UER00672"/>
</dbReference>
<dbReference type="Proteomes" id="UP000000746">
    <property type="component" value="Chromosome"/>
</dbReference>
<dbReference type="GO" id="GO:0005829">
    <property type="term" value="C:cytosol"/>
    <property type="evidence" value="ECO:0007669"/>
    <property type="project" value="TreeGrafter"/>
</dbReference>
<dbReference type="GO" id="GO:0005524">
    <property type="term" value="F:ATP binding"/>
    <property type="evidence" value="ECO:0007669"/>
    <property type="project" value="UniProtKB-UniRule"/>
</dbReference>
<dbReference type="GO" id="GO:0004370">
    <property type="term" value="F:glycerol kinase activity"/>
    <property type="evidence" value="ECO:0000250"/>
    <property type="project" value="UniProtKB"/>
</dbReference>
<dbReference type="GO" id="GO:0046872">
    <property type="term" value="F:metal ion binding"/>
    <property type="evidence" value="ECO:0007669"/>
    <property type="project" value="UniProtKB-KW"/>
</dbReference>
<dbReference type="GO" id="GO:0019563">
    <property type="term" value="P:glycerol catabolic process"/>
    <property type="evidence" value="ECO:0007669"/>
    <property type="project" value="UniProtKB-UniRule"/>
</dbReference>
<dbReference type="GO" id="GO:0006071">
    <property type="term" value="P:glycerol metabolic process"/>
    <property type="evidence" value="ECO:0000250"/>
    <property type="project" value="UniProtKB"/>
</dbReference>
<dbReference type="GO" id="GO:0006072">
    <property type="term" value="P:glycerol-3-phosphate metabolic process"/>
    <property type="evidence" value="ECO:0007669"/>
    <property type="project" value="InterPro"/>
</dbReference>
<dbReference type="CDD" id="cd07786">
    <property type="entry name" value="FGGY_EcGK_like"/>
    <property type="match status" value="1"/>
</dbReference>
<dbReference type="FunFam" id="3.30.420.40:FF:000007">
    <property type="entry name" value="Glycerol kinase"/>
    <property type="match status" value="1"/>
</dbReference>
<dbReference type="FunFam" id="3.30.420.40:FF:000008">
    <property type="entry name" value="Glycerol kinase"/>
    <property type="match status" value="1"/>
</dbReference>
<dbReference type="Gene3D" id="3.30.420.40">
    <property type="match status" value="2"/>
</dbReference>
<dbReference type="HAMAP" id="MF_00186">
    <property type="entry name" value="Glycerol_kin"/>
    <property type="match status" value="1"/>
</dbReference>
<dbReference type="InterPro" id="IPR043129">
    <property type="entry name" value="ATPase_NBD"/>
</dbReference>
<dbReference type="InterPro" id="IPR000577">
    <property type="entry name" value="Carb_kinase_FGGY"/>
</dbReference>
<dbReference type="InterPro" id="IPR018483">
    <property type="entry name" value="Carb_kinase_FGGY_CS"/>
</dbReference>
<dbReference type="InterPro" id="IPR018485">
    <property type="entry name" value="FGGY_C"/>
</dbReference>
<dbReference type="InterPro" id="IPR018484">
    <property type="entry name" value="FGGY_N"/>
</dbReference>
<dbReference type="InterPro" id="IPR005999">
    <property type="entry name" value="Glycerol_kin"/>
</dbReference>
<dbReference type="NCBIfam" id="TIGR01311">
    <property type="entry name" value="glycerol_kin"/>
    <property type="match status" value="1"/>
</dbReference>
<dbReference type="NCBIfam" id="NF000756">
    <property type="entry name" value="PRK00047.1"/>
    <property type="match status" value="1"/>
</dbReference>
<dbReference type="PANTHER" id="PTHR10196:SF69">
    <property type="entry name" value="GLYCEROL KINASE"/>
    <property type="match status" value="1"/>
</dbReference>
<dbReference type="PANTHER" id="PTHR10196">
    <property type="entry name" value="SUGAR KINASE"/>
    <property type="match status" value="1"/>
</dbReference>
<dbReference type="Pfam" id="PF02782">
    <property type="entry name" value="FGGY_C"/>
    <property type="match status" value="1"/>
</dbReference>
<dbReference type="Pfam" id="PF00370">
    <property type="entry name" value="FGGY_N"/>
    <property type="match status" value="1"/>
</dbReference>
<dbReference type="PIRSF" id="PIRSF000538">
    <property type="entry name" value="GlpK"/>
    <property type="match status" value="1"/>
</dbReference>
<dbReference type="SUPFAM" id="SSF53067">
    <property type="entry name" value="Actin-like ATPase domain"/>
    <property type="match status" value="2"/>
</dbReference>
<dbReference type="PROSITE" id="PS00933">
    <property type="entry name" value="FGGY_KINASES_1"/>
    <property type="match status" value="1"/>
</dbReference>
<dbReference type="PROSITE" id="PS00445">
    <property type="entry name" value="FGGY_KINASES_2"/>
    <property type="match status" value="1"/>
</dbReference>
<sequence>MTEKKYIVALDQGTTSSRAVVMDHDANIISVSQREFEQIYPKPGWVEHDPMEIWATQSSTLVEVLAKADISSDQIAAIGITNQRETTIVWEKETGKPIYNAIVWQCRRTAEICEHLKRDGLEDYIRSNTGLVIDPYFSGTKVKWILDHVEGSRERARRGELLFGTVDTWLIWKMTQGRVHVTDYTNASRTMLFNIHTLDWDDKMLEVLDIPREMLPEVRRSSEVYGQTNIGGKGGTRIPISGIAGDQQAALFGQLCVKEGMAKNTYGTGCFMLMNTGEKAVKSENGLLTTIACGPTGEVNYALEGAVFMAGASIQWLRDEMKLINDAYDSEYFATKVQNTNGVYVVPAFTGLGAPYWDPYARGAIFGLTRGVNANHIIRATLESIAYQTRDVLEAMQADSGIRLHALRVDGGAVANNFLMQFQSDILGTRVERPEVREVTALGAAYLAGLAVGFWQNLDELQEKAVIEREFRPGIETTERNYRYAGWKKAVKRAMAWEEHDE</sequence>
<reference key="1">
    <citation type="journal article" date="2009" name="PLoS Genet.">
        <title>Organised genome dynamics in the Escherichia coli species results in highly diverse adaptive paths.</title>
        <authorList>
            <person name="Touchon M."/>
            <person name="Hoede C."/>
            <person name="Tenaillon O."/>
            <person name="Barbe V."/>
            <person name="Baeriswyl S."/>
            <person name="Bidet P."/>
            <person name="Bingen E."/>
            <person name="Bonacorsi S."/>
            <person name="Bouchier C."/>
            <person name="Bouvet O."/>
            <person name="Calteau A."/>
            <person name="Chiapello H."/>
            <person name="Clermont O."/>
            <person name="Cruveiller S."/>
            <person name="Danchin A."/>
            <person name="Diard M."/>
            <person name="Dossat C."/>
            <person name="Karoui M.E."/>
            <person name="Frapy E."/>
            <person name="Garry L."/>
            <person name="Ghigo J.M."/>
            <person name="Gilles A.M."/>
            <person name="Johnson J."/>
            <person name="Le Bouguenec C."/>
            <person name="Lescat M."/>
            <person name="Mangenot S."/>
            <person name="Martinez-Jehanne V."/>
            <person name="Matic I."/>
            <person name="Nassif X."/>
            <person name="Oztas S."/>
            <person name="Petit M.A."/>
            <person name="Pichon C."/>
            <person name="Rouy Z."/>
            <person name="Ruf C.S."/>
            <person name="Schneider D."/>
            <person name="Tourret J."/>
            <person name="Vacherie B."/>
            <person name="Vallenet D."/>
            <person name="Medigue C."/>
            <person name="Rocha E.P.C."/>
            <person name="Denamur E."/>
        </authorList>
    </citation>
    <scope>NUCLEOTIDE SEQUENCE [LARGE SCALE GENOMIC DNA]</scope>
    <source>
        <strain>55989 / EAEC</strain>
    </source>
</reference>
<name>GLPK_ECO55</name>
<protein>
    <recommendedName>
        <fullName evidence="1">Glycerol kinase</fullName>
        <ecNumber evidence="1">2.7.1.30</ecNumber>
    </recommendedName>
    <alternativeName>
        <fullName evidence="1">ATP:glycerol 3-phosphotransferase</fullName>
    </alternativeName>
    <alternativeName>
        <fullName evidence="1">Glycerokinase</fullName>
        <shortName evidence="1">GK</shortName>
    </alternativeName>
</protein>
<accession>B7LA23</accession>
<comment type="function">
    <text evidence="1">Key enzyme in the regulation of glycerol uptake and metabolism. Catalyzes the phosphorylation of glycerol to yield sn-glycerol 3-phosphate.</text>
</comment>
<comment type="catalytic activity">
    <reaction evidence="1">
        <text>glycerol + ATP = sn-glycerol 3-phosphate + ADP + H(+)</text>
        <dbReference type="Rhea" id="RHEA:21644"/>
        <dbReference type="ChEBI" id="CHEBI:15378"/>
        <dbReference type="ChEBI" id="CHEBI:17754"/>
        <dbReference type="ChEBI" id="CHEBI:30616"/>
        <dbReference type="ChEBI" id="CHEBI:57597"/>
        <dbReference type="ChEBI" id="CHEBI:456216"/>
        <dbReference type="EC" id="2.7.1.30"/>
    </reaction>
</comment>
<comment type="activity regulation">
    <text evidence="1">Activity of this regulatory enzyme is affected by several metabolites. Allosterically and non-competitively inhibited by fructose 1,6-bisphosphate (FBP) and unphosphorylated phosphocarrier protein EIIA-Glc (III-Glc), an integral component of the bacterial phosphotransferase (PTS) system.</text>
</comment>
<comment type="pathway">
    <text evidence="1">Polyol metabolism; glycerol degradation via glycerol kinase pathway; sn-glycerol 3-phosphate from glycerol: step 1/1.</text>
</comment>
<comment type="subunit">
    <text evidence="1">Homotetramer and homodimer (in equilibrium). Heterodimer with EIIA-Glc. Binds 1 zinc ion per glycerol kinase EIIA-Glc dimer. The zinc ion is important for dimerization.</text>
</comment>
<comment type="similarity">
    <text evidence="1">Belongs to the FGGY kinase family.</text>
</comment>
<proteinExistence type="inferred from homology"/>
<evidence type="ECO:0000255" key="1">
    <source>
        <dbReference type="HAMAP-Rule" id="MF_00186"/>
    </source>
</evidence>